<evidence type="ECO:0000255" key="1">
    <source>
        <dbReference type="HAMAP-Rule" id="MF_00534"/>
    </source>
</evidence>
<sequence>MTVASVEQMFSGKIQVGSEVTVRGWVRTRRDSKAGLSFVSVSDGSCFAAIQVVTPAHLPNYETEVRKLTTGCAVIVIGTLAPSLGQGQQFEIQAQSIEVVGWVEDPETYPIQPKQHSLEFLREVAHLRPRTNLFGAVARIRHCLSQAVHRFFHENGYYWITTPIITTSDAEGAGQMFRVSTLDLVNLPRTETGGIDFSHDFFGKETFLTVSGQLNVEAYALALSKVYTFGPTFRAENSHTPRHLAEFWMIEPEIAFADLAEDARVAEQFLKFLFKTVLEERDDDLAFITERVEKTTISKLEGFINSPFERIEYTDAIKLLERSGKKFDFPVEWGLDLQTEHERWLTEKHIGRPVVVTNYPEHIKAFYMRLNDDGKTVAAMDVLAPGIGEIIGGSQREERLEMLDIRMAQFGLDPAHYQWYRDFRRYGSVPHAGFGLGFERLVVYVCGLSNIRDAIPYPRAPGSAEF</sequence>
<organism>
    <name type="scientific">Xylella fastidiosa (strain Temecula1 / ATCC 700964)</name>
    <dbReference type="NCBI Taxonomy" id="183190"/>
    <lineage>
        <taxon>Bacteria</taxon>
        <taxon>Pseudomonadati</taxon>
        <taxon>Pseudomonadota</taxon>
        <taxon>Gammaproteobacteria</taxon>
        <taxon>Lysobacterales</taxon>
        <taxon>Lysobacteraceae</taxon>
        <taxon>Xylella</taxon>
    </lineage>
</organism>
<proteinExistence type="inferred from homology"/>
<protein>
    <recommendedName>
        <fullName evidence="1">Asparagine--tRNA ligase</fullName>
        <ecNumber evidence="1">6.1.1.22</ecNumber>
    </recommendedName>
    <alternativeName>
        <fullName evidence="1">Asparaginyl-tRNA synthetase</fullName>
        <shortName evidence="1">AsnRS</shortName>
    </alternativeName>
</protein>
<comment type="catalytic activity">
    <reaction evidence="1">
        <text>tRNA(Asn) + L-asparagine + ATP = L-asparaginyl-tRNA(Asn) + AMP + diphosphate + H(+)</text>
        <dbReference type="Rhea" id="RHEA:11180"/>
        <dbReference type="Rhea" id="RHEA-COMP:9659"/>
        <dbReference type="Rhea" id="RHEA-COMP:9674"/>
        <dbReference type="ChEBI" id="CHEBI:15378"/>
        <dbReference type="ChEBI" id="CHEBI:30616"/>
        <dbReference type="ChEBI" id="CHEBI:33019"/>
        <dbReference type="ChEBI" id="CHEBI:58048"/>
        <dbReference type="ChEBI" id="CHEBI:78442"/>
        <dbReference type="ChEBI" id="CHEBI:78515"/>
        <dbReference type="ChEBI" id="CHEBI:456215"/>
        <dbReference type="EC" id="6.1.1.22"/>
    </reaction>
</comment>
<comment type="subunit">
    <text evidence="1">Homodimer.</text>
</comment>
<comment type="subcellular location">
    <subcellularLocation>
        <location>Cytoplasm</location>
    </subcellularLocation>
</comment>
<comment type="similarity">
    <text evidence="1">Belongs to the class-II aminoacyl-tRNA synthetase family.</text>
</comment>
<name>SYN_XYLFT</name>
<keyword id="KW-0030">Aminoacyl-tRNA synthetase</keyword>
<keyword id="KW-0067">ATP-binding</keyword>
<keyword id="KW-0963">Cytoplasm</keyword>
<keyword id="KW-0436">Ligase</keyword>
<keyword id="KW-0547">Nucleotide-binding</keyword>
<keyword id="KW-0648">Protein biosynthesis</keyword>
<keyword id="KW-1185">Reference proteome</keyword>
<accession>Q87A82</accession>
<dbReference type="EC" id="6.1.1.22" evidence="1"/>
<dbReference type="EMBL" id="AE009442">
    <property type="protein sequence ID" value="AAO29777.1"/>
    <property type="molecule type" value="Genomic_DNA"/>
</dbReference>
<dbReference type="RefSeq" id="WP_004090342.1">
    <property type="nucleotide sequence ID" value="NC_004556.1"/>
</dbReference>
<dbReference type="SMR" id="Q87A82"/>
<dbReference type="GeneID" id="93905808"/>
<dbReference type="KEGG" id="xft:PD_1947"/>
<dbReference type="HOGENOM" id="CLU_004553_2_0_6"/>
<dbReference type="Proteomes" id="UP000002516">
    <property type="component" value="Chromosome"/>
</dbReference>
<dbReference type="GO" id="GO:0005737">
    <property type="term" value="C:cytoplasm"/>
    <property type="evidence" value="ECO:0007669"/>
    <property type="project" value="UniProtKB-SubCell"/>
</dbReference>
<dbReference type="GO" id="GO:0004816">
    <property type="term" value="F:asparagine-tRNA ligase activity"/>
    <property type="evidence" value="ECO:0007669"/>
    <property type="project" value="UniProtKB-UniRule"/>
</dbReference>
<dbReference type="GO" id="GO:0005524">
    <property type="term" value="F:ATP binding"/>
    <property type="evidence" value="ECO:0007669"/>
    <property type="project" value="UniProtKB-UniRule"/>
</dbReference>
<dbReference type="GO" id="GO:0003676">
    <property type="term" value="F:nucleic acid binding"/>
    <property type="evidence" value="ECO:0007669"/>
    <property type="project" value="InterPro"/>
</dbReference>
<dbReference type="GO" id="GO:0006421">
    <property type="term" value="P:asparaginyl-tRNA aminoacylation"/>
    <property type="evidence" value="ECO:0007669"/>
    <property type="project" value="UniProtKB-UniRule"/>
</dbReference>
<dbReference type="CDD" id="cd00776">
    <property type="entry name" value="AsxRS_core"/>
    <property type="match status" value="1"/>
</dbReference>
<dbReference type="CDD" id="cd04318">
    <property type="entry name" value="EcAsnRS_like_N"/>
    <property type="match status" value="1"/>
</dbReference>
<dbReference type="FunFam" id="3.30.930.10:FF:000016">
    <property type="entry name" value="Asparagine--tRNA ligase"/>
    <property type="match status" value="1"/>
</dbReference>
<dbReference type="Gene3D" id="3.30.930.10">
    <property type="entry name" value="Bira Bifunctional Protein, Domain 2"/>
    <property type="match status" value="1"/>
</dbReference>
<dbReference type="Gene3D" id="2.40.50.140">
    <property type="entry name" value="Nucleic acid-binding proteins"/>
    <property type="match status" value="1"/>
</dbReference>
<dbReference type="HAMAP" id="MF_00534">
    <property type="entry name" value="Asn_tRNA_synth"/>
    <property type="match status" value="1"/>
</dbReference>
<dbReference type="InterPro" id="IPR004364">
    <property type="entry name" value="Aa-tRNA-synt_II"/>
</dbReference>
<dbReference type="InterPro" id="IPR006195">
    <property type="entry name" value="aa-tRNA-synth_II"/>
</dbReference>
<dbReference type="InterPro" id="IPR045864">
    <property type="entry name" value="aa-tRNA-synth_II/BPL/LPL"/>
</dbReference>
<dbReference type="InterPro" id="IPR004522">
    <property type="entry name" value="Asn-tRNA-ligase"/>
</dbReference>
<dbReference type="InterPro" id="IPR002312">
    <property type="entry name" value="Asp/Asn-tRNA-synth_IIb"/>
</dbReference>
<dbReference type="InterPro" id="IPR012340">
    <property type="entry name" value="NA-bd_OB-fold"/>
</dbReference>
<dbReference type="InterPro" id="IPR004365">
    <property type="entry name" value="NA-bd_OB_tRNA"/>
</dbReference>
<dbReference type="NCBIfam" id="TIGR00457">
    <property type="entry name" value="asnS"/>
    <property type="match status" value="1"/>
</dbReference>
<dbReference type="NCBIfam" id="NF003037">
    <property type="entry name" value="PRK03932.1"/>
    <property type="match status" value="1"/>
</dbReference>
<dbReference type="PANTHER" id="PTHR22594:SF34">
    <property type="entry name" value="ASPARAGINE--TRNA LIGASE, MITOCHONDRIAL-RELATED"/>
    <property type="match status" value="1"/>
</dbReference>
<dbReference type="PANTHER" id="PTHR22594">
    <property type="entry name" value="ASPARTYL/LYSYL-TRNA SYNTHETASE"/>
    <property type="match status" value="1"/>
</dbReference>
<dbReference type="Pfam" id="PF00152">
    <property type="entry name" value="tRNA-synt_2"/>
    <property type="match status" value="1"/>
</dbReference>
<dbReference type="Pfam" id="PF01336">
    <property type="entry name" value="tRNA_anti-codon"/>
    <property type="match status" value="1"/>
</dbReference>
<dbReference type="PRINTS" id="PR01042">
    <property type="entry name" value="TRNASYNTHASP"/>
</dbReference>
<dbReference type="SUPFAM" id="SSF55681">
    <property type="entry name" value="Class II aaRS and biotin synthetases"/>
    <property type="match status" value="1"/>
</dbReference>
<dbReference type="SUPFAM" id="SSF50249">
    <property type="entry name" value="Nucleic acid-binding proteins"/>
    <property type="match status" value="1"/>
</dbReference>
<dbReference type="PROSITE" id="PS50862">
    <property type="entry name" value="AA_TRNA_LIGASE_II"/>
    <property type="match status" value="1"/>
</dbReference>
<gene>
    <name evidence="1" type="primary">asnS</name>
    <name type="ordered locus">PD_1947</name>
</gene>
<reference key="1">
    <citation type="journal article" date="2003" name="J. Bacteriol.">
        <title>Comparative analyses of the complete genome sequences of Pierce's disease and citrus variegated chlorosis strains of Xylella fastidiosa.</title>
        <authorList>
            <person name="Van Sluys M.A."/>
            <person name="de Oliveira M.C."/>
            <person name="Monteiro-Vitorello C.B."/>
            <person name="Miyaki C.Y."/>
            <person name="Furlan L.R."/>
            <person name="Camargo L.E.A."/>
            <person name="da Silva A.C.R."/>
            <person name="Moon D.H."/>
            <person name="Takita M.A."/>
            <person name="Lemos E.G.M."/>
            <person name="Machado M.A."/>
            <person name="Ferro M.I.T."/>
            <person name="da Silva F.R."/>
            <person name="Goldman M.H.S."/>
            <person name="Goldman G.H."/>
            <person name="Lemos M.V.F."/>
            <person name="El-Dorry H."/>
            <person name="Tsai S.M."/>
            <person name="Carrer H."/>
            <person name="Carraro D.M."/>
            <person name="de Oliveira R.C."/>
            <person name="Nunes L.R."/>
            <person name="Siqueira W.J."/>
            <person name="Coutinho L.L."/>
            <person name="Kimura E.T."/>
            <person name="Ferro E.S."/>
            <person name="Harakava R."/>
            <person name="Kuramae E.E."/>
            <person name="Marino C.L."/>
            <person name="Giglioti E."/>
            <person name="Abreu I.L."/>
            <person name="Alves L.M.C."/>
            <person name="do Amaral A.M."/>
            <person name="Baia G.S."/>
            <person name="Blanco S.R."/>
            <person name="Brito M.S."/>
            <person name="Cannavan F.S."/>
            <person name="Celestino A.V."/>
            <person name="da Cunha A.F."/>
            <person name="Fenille R.C."/>
            <person name="Ferro J.A."/>
            <person name="Formighieri E.F."/>
            <person name="Kishi L.T."/>
            <person name="Leoni S.G."/>
            <person name="Oliveira A.R."/>
            <person name="Rosa V.E. Jr."/>
            <person name="Sassaki F.T."/>
            <person name="Sena J.A.D."/>
            <person name="de Souza A.A."/>
            <person name="Truffi D."/>
            <person name="Tsukumo F."/>
            <person name="Yanai G.M."/>
            <person name="Zaros L.G."/>
            <person name="Civerolo E.L."/>
            <person name="Simpson A.J.G."/>
            <person name="Almeida N.F. Jr."/>
            <person name="Setubal J.C."/>
            <person name="Kitajima J.P."/>
        </authorList>
    </citation>
    <scope>NUCLEOTIDE SEQUENCE [LARGE SCALE GENOMIC DNA]</scope>
    <source>
        <strain>Temecula1 / ATCC 700964</strain>
    </source>
</reference>
<feature type="chain" id="PRO_0000176482" description="Asparagine--tRNA ligase">
    <location>
        <begin position="1"/>
        <end position="466"/>
    </location>
</feature>